<keyword id="KW-0030">Aminoacyl-tRNA synthetase</keyword>
<keyword id="KW-0067">ATP-binding</keyword>
<keyword id="KW-0963">Cytoplasm</keyword>
<keyword id="KW-0436">Ligase</keyword>
<keyword id="KW-0547">Nucleotide-binding</keyword>
<keyword id="KW-0648">Protein biosynthesis</keyword>
<keyword id="KW-1185">Reference proteome</keyword>
<protein>
    <recommendedName>
        <fullName evidence="1">Asparagine--tRNA ligase</fullName>
        <ecNumber evidence="1">6.1.1.22</ecNumber>
    </recommendedName>
    <alternativeName>
        <fullName evidence="1">Asparaginyl-tRNA synthetase</fullName>
        <shortName evidence="1">AsnRS</shortName>
    </alternativeName>
</protein>
<name>SYN_SORC5</name>
<comment type="catalytic activity">
    <reaction evidence="1">
        <text>tRNA(Asn) + L-asparagine + ATP = L-asparaginyl-tRNA(Asn) + AMP + diphosphate + H(+)</text>
        <dbReference type="Rhea" id="RHEA:11180"/>
        <dbReference type="Rhea" id="RHEA-COMP:9659"/>
        <dbReference type="Rhea" id="RHEA-COMP:9674"/>
        <dbReference type="ChEBI" id="CHEBI:15378"/>
        <dbReference type="ChEBI" id="CHEBI:30616"/>
        <dbReference type="ChEBI" id="CHEBI:33019"/>
        <dbReference type="ChEBI" id="CHEBI:58048"/>
        <dbReference type="ChEBI" id="CHEBI:78442"/>
        <dbReference type="ChEBI" id="CHEBI:78515"/>
        <dbReference type="ChEBI" id="CHEBI:456215"/>
        <dbReference type="EC" id="6.1.1.22"/>
    </reaction>
</comment>
<comment type="subunit">
    <text evidence="1">Homodimer.</text>
</comment>
<comment type="subcellular location">
    <subcellularLocation>
        <location evidence="1">Cytoplasm</location>
    </subcellularLocation>
</comment>
<comment type="similarity">
    <text evidence="1">Belongs to the class-II aminoacyl-tRNA synthetase family.</text>
</comment>
<organism>
    <name type="scientific">Sorangium cellulosum (strain So ce56)</name>
    <name type="common">Polyangium cellulosum (strain So ce56)</name>
    <dbReference type="NCBI Taxonomy" id="448385"/>
    <lineage>
        <taxon>Bacteria</taxon>
        <taxon>Pseudomonadati</taxon>
        <taxon>Myxococcota</taxon>
        <taxon>Polyangia</taxon>
        <taxon>Polyangiales</taxon>
        <taxon>Polyangiaceae</taxon>
        <taxon>Sorangium</taxon>
    </lineage>
</organism>
<sequence length="446" mass="50137">MQDQPVIATSDLSAHVGSTVVLRGWLYNKRSSGKLHFLELRDGFGTVQCVMAKSDVGDEVFAAADKVTQESVIDVVGEVKAHPKRAGVYEIAASGFRVLGPTAGEYPISPKEHGTDFLMDHRHLWLRSKRQHAILRVRHTIIQAIRDFFDGRGFTLVDAPVFTPNACEGTSTLFQTDYHGEKAYLTQSGQLYMEAAAAAFGKAYCFGPTFRAEKSKTRRHLAEFWMVEPEVAFMDLAGDMDLAEDFLCFIVERVLERRRPELAVLERDVGKLEAVKKPFPRIRYDEAVAILNEARAEKRKMAGEAEIPDFPWGEDFGGEDETIISGRYDRPVMIHRYPAQVKAFYMKRDPTDDRLALCVDVLAPEGYGEVIGGGQREDDLATLERAIEAHQLPPEAFGWYLDLRRYGTFPHAGFGLGVERSVAWICGLPHVRETIPFPRMLNRLSP</sequence>
<dbReference type="EC" id="6.1.1.22" evidence="1"/>
<dbReference type="EMBL" id="AM746676">
    <property type="protein sequence ID" value="CAN96079.1"/>
    <property type="molecule type" value="Genomic_DNA"/>
</dbReference>
<dbReference type="RefSeq" id="WP_012238544.1">
    <property type="nucleotide sequence ID" value="NC_010162.1"/>
</dbReference>
<dbReference type="SMR" id="A9GBR2"/>
<dbReference type="STRING" id="448385.sce5915"/>
<dbReference type="KEGG" id="scl:sce5915"/>
<dbReference type="eggNOG" id="COG0017">
    <property type="taxonomic scope" value="Bacteria"/>
</dbReference>
<dbReference type="HOGENOM" id="CLU_004553_2_0_7"/>
<dbReference type="OrthoDB" id="9802326at2"/>
<dbReference type="BioCyc" id="SCEL448385:SCE_RS30410-MONOMER"/>
<dbReference type="Proteomes" id="UP000002139">
    <property type="component" value="Chromosome"/>
</dbReference>
<dbReference type="GO" id="GO:0005737">
    <property type="term" value="C:cytoplasm"/>
    <property type="evidence" value="ECO:0007669"/>
    <property type="project" value="UniProtKB-SubCell"/>
</dbReference>
<dbReference type="GO" id="GO:0004816">
    <property type="term" value="F:asparagine-tRNA ligase activity"/>
    <property type="evidence" value="ECO:0007669"/>
    <property type="project" value="UniProtKB-UniRule"/>
</dbReference>
<dbReference type="GO" id="GO:0005524">
    <property type="term" value="F:ATP binding"/>
    <property type="evidence" value="ECO:0007669"/>
    <property type="project" value="UniProtKB-UniRule"/>
</dbReference>
<dbReference type="GO" id="GO:0003676">
    <property type="term" value="F:nucleic acid binding"/>
    <property type="evidence" value="ECO:0007669"/>
    <property type="project" value="InterPro"/>
</dbReference>
<dbReference type="GO" id="GO:0006421">
    <property type="term" value="P:asparaginyl-tRNA aminoacylation"/>
    <property type="evidence" value="ECO:0007669"/>
    <property type="project" value="UniProtKB-UniRule"/>
</dbReference>
<dbReference type="CDD" id="cd04100">
    <property type="entry name" value="Asp_Lys_Asn_RS_N"/>
    <property type="match status" value="1"/>
</dbReference>
<dbReference type="CDD" id="cd00776">
    <property type="entry name" value="AsxRS_core"/>
    <property type="match status" value="1"/>
</dbReference>
<dbReference type="Gene3D" id="3.30.930.10">
    <property type="entry name" value="Bira Bifunctional Protein, Domain 2"/>
    <property type="match status" value="1"/>
</dbReference>
<dbReference type="Gene3D" id="2.40.50.140">
    <property type="entry name" value="Nucleic acid-binding proteins"/>
    <property type="match status" value="1"/>
</dbReference>
<dbReference type="HAMAP" id="MF_00534">
    <property type="entry name" value="Asn_tRNA_synth"/>
    <property type="match status" value="1"/>
</dbReference>
<dbReference type="InterPro" id="IPR004364">
    <property type="entry name" value="Aa-tRNA-synt_II"/>
</dbReference>
<dbReference type="InterPro" id="IPR006195">
    <property type="entry name" value="aa-tRNA-synth_II"/>
</dbReference>
<dbReference type="InterPro" id="IPR045864">
    <property type="entry name" value="aa-tRNA-synth_II/BPL/LPL"/>
</dbReference>
<dbReference type="InterPro" id="IPR004522">
    <property type="entry name" value="Asn-tRNA-ligase"/>
</dbReference>
<dbReference type="InterPro" id="IPR002312">
    <property type="entry name" value="Asp/Asn-tRNA-synth_IIb"/>
</dbReference>
<dbReference type="InterPro" id="IPR012340">
    <property type="entry name" value="NA-bd_OB-fold"/>
</dbReference>
<dbReference type="InterPro" id="IPR004365">
    <property type="entry name" value="NA-bd_OB_tRNA"/>
</dbReference>
<dbReference type="NCBIfam" id="TIGR00457">
    <property type="entry name" value="asnS"/>
    <property type="match status" value="1"/>
</dbReference>
<dbReference type="NCBIfam" id="NF003037">
    <property type="entry name" value="PRK03932.1"/>
    <property type="match status" value="1"/>
</dbReference>
<dbReference type="PANTHER" id="PTHR22594:SF34">
    <property type="entry name" value="ASPARAGINE--TRNA LIGASE, MITOCHONDRIAL-RELATED"/>
    <property type="match status" value="1"/>
</dbReference>
<dbReference type="PANTHER" id="PTHR22594">
    <property type="entry name" value="ASPARTYL/LYSYL-TRNA SYNTHETASE"/>
    <property type="match status" value="1"/>
</dbReference>
<dbReference type="Pfam" id="PF00152">
    <property type="entry name" value="tRNA-synt_2"/>
    <property type="match status" value="1"/>
</dbReference>
<dbReference type="Pfam" id="PF01336">
    <property type="entry name" value="tRNA_anti-codon"/>
    <property type="match status" value="1"/>
</dbReference>
<dbReference type="PRINTS" id="PR01042">
    <property type="entry name" value="TRNASYNTHASP"/>
</dbReference>
<dbReference type="SUPFAM" id="SSF55681">
    <property type="entry name" value="Class II aaRS and biotin synthetases"/>
    <property type="match status" value="1"/>
</dbReference>
<dbReference type="SUPFAM" id="SSF50249">
    <property type="entry name" value="Nucleic acid-binding proteins"/>
    <property type="match status" value="1"/>
</dbReference>
<dbReference type="PROSITE" id="PS50862">
    <property type="entry name" value="AA_TRNA_LIGASE_II"/>
    <property type="match status" value="1"/>
</dbReference>
<reference key="1">
    <citation type="journal article" date="2007" name="Nat. Biotechnol.">
        <title>Complete genome sequence of the myxobacterium Sorangium cellulosum.</title>
        <authorList>
            <person name="Schneiker S."/>
            <person name="Perlova O."/>
            <person name="Kaiser O."/>
            <person name="Gerth K."/>
            <person name="Alici A."/>
            <person name="Altmeyer M.O."/>
            <person name="Bartels D."/>
            <person name="Bekel T."/>
            <person name="Beyer S."/>
            <person name="Bode E."/>
            <person name="Bode H.B."/>
            <person name="Bolten C.J."/>
            <person name="Choudhuri J.V."/>
            <person name="Doss S."/>
            <person name="Elnakady Y.A."/>
            <person name="Frank B."/>
            <person name="Gaigalat L."/>
            <person name="Goesmann A."/>
            <person name="Groeger C."/>
            <person name="Gross F."/>
            <person name="Jelsbak L."/>
            <person name="Jelsbak L."/>
            <person name="Kalinowski J."/>
            <person name="Kegler C."/>
            <person name="Knauber T."/>
            <person name="Konietzny S."/>
            <person name="Kopp M."/>
            <person name="Krause L."/>
            <person name="Krug D."/>
            <person name="Linke B."/>
            <person name="Mahmud T."/>
            <person name="Martinez-Arias R."/>
            <person name="McHardy A.C."/>
            <person name="Merai M."/>
            <person name="Meyer F."/>
            <person name="Mormann S."/>
            <person name="Munoz-Dorado J."/>
            <person name="Perez J."/>
            <person name="Pradella S."/>
            <person name="Rachid S."/>
            <person name="Raddatz G."/>
            <person name="Rosenau F."/>
            <person name="Rueckert C."/>
            <person name="Sasse F."/>
            <person name="Scharfe M."/>
            <person name="Schuster S.C."/>
            <person name="Suen G."/>
            <person name="Treuner-Lange A."/>
            <person name="Velicer G.J."/>
            <person name="Vorholter F.-J."/>
            <person name="Weissman K.J."/>
            <person name="Welch R.D."/>
            <person name="Wenzel S.C."/>
            <person name="Whitworth D.E."/>
            <person name="Wilhelm S."/>
            <person name="Wittmann C."/>
            <person name="Bloecker H."/>
            <person name="Puehler A."/>
            <person name="Mueller R."/>
        </authorList>
    </citation>
    <scope>NUCLEOTIDE SEQUENCE [LARGE SCALE GENOMIC DNA]</scope>
    <source>
        <strain>So ce56</strain>
    </source>
</reference>
<accession>A9GBR2</accession>
<proteinExistence type="inferred from homology"/>
<feature type="chain" id="PRO_1000128215" description="Asparagine--tRNA ligase">
    <location>
        <begin position="1"/>
        <end position="446"/>
    </location>
</feature>
<evidence type="ECO:0000255" key="1">
    <source>
        <dbReference type="HAMAP-Rule" id="MF_00534"/>
    </source>
</evidence>
<gene>
    <name evidence="1" type="primary">asnS</name>
    <name type="ordered locus">sce5915</name>
</gene>